<dbReference type="EC" id="2.5.1.19" evidence="1"/>
<dbReference type="EMBL" id="CP000482">
    <property type="protein sequence ID" value="ABK98967.1"/>
    <property type="molecule type" value="Genomic_DNA"/>
</dbReference>
<dbReference type="RefSeq" id="WP_011735260.1">
    <property type="nucleotide sequence ID" value="NC_008609.1"/>
</dbReference>
<dbReference type="SMR" id="A1ANP7"/>
<dbReference type="STRING" id="338966.Ppro_1347"/>
<dbReference type="KEGG" id="ppd:Ppro_1347"/>
<dbReference type="eggNOG" id="COG0128">
    <property type="taxonomic scope" value="Bacteria"/>
</dbReference>
<dbReference type="HOGENOM" id="CLU_024321_0_1_7"/>
<dbReference type="OrthoDB" id="9809920at2"/>
<dbReference type="UniPathway" id="UPA00053">
    <property type="reaction ID" value="UER00089"/>
</dbReference>
<dbReference type="Proteomes" id="UP000006732">
    <property type="component" value="Chromosome"/>
</dbReference>
<dbReference type="GO" id="GO:0005737">
    <property type="term" value="C:cytoplasm"/>
    <property type="evidence" value="ECO:0007669"/>
    <property type="project" value="UniProtKB-SubCell"/>
</dbReference>
<dbReference type="GO" id="GO:0003866">
    <property type="term" value="F:3-phosphoshikimate 1-carboxyvinyltransferase activity"/>
    <property type="evidence" value="ECO:0007669"/>
    <property type="project" value="UniProtKB-UniRule"/>
</dbReference>
<dbReference type="GO" id="GO:0008652">
    <property type="term" value="P:amino acid biosynthetic process"/>
    <property type="evidence" value="ECO:0007669"/>
    <property type="project" value="UniProtKB-KW"/>
</dbReference>
<dbReference type="GO" id="GO:0009073">
    <property type="term" value="P:aromatic amino acid family biosynthetic process"/>
    <property type="evidence" value="ECO:0007669"/>
    <property type="project" value="UniProtKB-KW"/>
</dbReference>
<dbReference type="GO" id="GO:0009423">
    <property type="term" value="P:chorismate biosynthetic process"/>
    <property type="evidence" value="ECO:0007669"/>
    <property type="project" value="UniProtKB-UniRule"/>
</dbReference>
<dbReference type="CDD" id="cd01556">
    <property type="entry name" value="EPSP_synthase"/>
    <property type="match status" value="1"/>
</dbReference>
<dbReference type="FunFam" id="3.65.10.10:FF:000005">
    <property type="entry name" value="3-phosphoshikimate 1-carboxyvinyltransferase"/>
    <property type="match status" value="1"/>
</dbReference>
<dbReference type="FunFam" id="3.65.10.10:FF:000006">
    <property type="entry name" value="3-phosphoshikimate 1-carboxyvinyltransferase"/>
    <property type="match status" value="1"/>
</dbReference>
<dbReference type="Gene3D" id="3.65.10.10">
    <property type="entry name" value="Enolpyruvate transferase domain"/>
    <property type="match status" value="2"/>
</dbReference>
<dbReference type="HAMAP" id="MF_00210">
    <property type="entry name" value="EPSP_synth"/>
    <property type="match status" value="1"/>
</dbReference>
<dbReference type="InterPro" id="IPR001986">
    <property type="entry name" value="Enolpyruvate_Tfrase_dom"/>
</dbReference>
<dbReference type="InterPro" id="IPR036968">
    <property type="entry name" value="Enolpyruvate_Tfrase_sf"/>
</dbReference>
<dbReference type="InterPro" id="IPR006264">
    <property type="entry name" value="EPSP_synthase"/>
</dbReference>
<dbReference type="InterPro" id="IPR023193">
    <property type="entry name" value="EPSP_synthase_CS"/>
</dbReference>
<dbReference type="InterPro" id="IPR013792">
    <property type="entry name" value="RNA3'P_cycl/enolpyr_Trfase_a/b"/>
</dbReference>
<dbReference type="NCBIfam" id="TIGR01356">
    <property type="entry name" value="aroA"/>
    <property type="match status" value="1"/>
</dbReference>
<dbReference type="PANTHER" id="PTHR21090">
    <property type="entry name" value="AROM/DEHYDROQUINATE SYNTHASE"/>
    <property type="match status" value="1"/>
</dbReference>
<dbReference type="PANTHER" id="PTHR21090:SF5">
    <property type="entry name" value="PENTAFUNCTIONAL AROM POLYPEPTIDE"/>
    <property type="match status" value="1"/>
</dbReference>
<dbReference type="Pfam" id="PF00275">
    <property type="entry name" value="EPSP_synthase"/>
    <property type="match status" value="1"/>
</dbReference>
<dbReference type="PIRSF" id="PIRSF000505">
    <property type="entry name" value="EPSPS"/>
    <property type="match status" value="1"/>
</dbReference>
<dbReference type="SUPFAM" id="SSF55205">
    <property type="entry name" value="EPT/RTPC-like"/>
    <property type="match status" value="1"/>
</dbReference>
<dbReference type="PROSITE" id="PS00104">
    <property type="entry name" value="EPSP_SYNTHASE_1"/>
    <property type="match status" value="1"/>
</dbReference>
<dbReference type="PROSITE" id="PS00885">
    <property type="entry name" value="EPSP_SYNTHASE_2"/>
    <property type="match status" value="1"/>
</dbReference>
<protein>
    <recommendedName>
        <fullName evidence="1">3-phosphoshikimate 1-carboxyvinyltransferase</fullName>
        <ecNumber evidence="1">2.5.1.19</ecNumber>
    </recommendedName>
    <alternativeName>
        <fullName evidence="1">5-enolpyruvylshikimate-3-phosphate synthase</fullName>
        <shortName evidence="1">EPSP synthase</shortName>
        <shortName evidence="1">EPSPS</shortName>
    </alternativeName>
</protein>
<feature type="chain" id="PRO_0000325368" description="3-phosphoshikimate 1-carboxyvinyltransferase">
    <location>
        <begin position="1"/>
        <end position="431"/>
    </location>
</feature>
<feature type="active site" description="Proton acceptor" evidence="1">
    <location>
        <position position="315"/>
    </location>
</feature>
<feature type="binding site" evidence="1">
    <location>
        <position position="22"/>
    </location>
    <ligand>
        <name>3-phosphoshikimate</name>
        <dbReference type="ChEBI" id="CHEBI:145989"/>
    </ligand>
</feature>
<feature type="binding site" evidence="1">
    <location>
        <position position="22"/>
    </location>
    <ligand>
        <name>phosphoenolpyruvate</name>
        <dbReference type="ChEBI" id="CHEBI:58702"/>
    </ligand>
</feature>
<feature type="binding site" evidence="1">
    <location>
        <position position="23"/>
    </location>
    <ligand>
        <name>3-phosphoshikimate</name>
        <dbReference type="ChEBI" id="CHEBI:145989"/>
    </ligand>
</feature>
<feature type="binding site" evidence="1">
    <location>
        <position position="27"/>
    </location>
    <ligand>
        <name>3-phosphoshikimate</name>
        <dbReference type="ChEBI" id="CHEBI:145989"/>
    </ligand>
</feature>
<feature type="binding site" evidence="1">
    <location>
        <position position="94"/>
    </location>
    <ligand>
        <name>phosphoenolpyruvate</name>
        <dbReference type="ChEBI" id="CHEBI:58702"/>
    </ligand>
</feature>
<feature type="binding site" evidence="1">
    <location>
        <position position="122"/>
    </location>
    <ligand>
        <name>phosphoenolpyruvate</name>
        <dbReference type="ChEBI" id="CHEBI:58702"/>
    </ligand>
</feature>
<feature type="binding site" evidence="1">
    <location>
        <position position="167"/>
    </location>
    <ligand>
        <name>3-phosphoshikimate</name>
        <dbReference type="ChEBI" id="CHEBI:145989"/>
    </ligand>
</feature>
<feature type="binding site" evidence="1">
    <location>
        <position position="169"/>
    </location>
    <ligand>
        <name>3-phosphoshikimate</name>
        <dbReference type="ChEBI" id="CHEBI:145989"/>
    </ligand>
</feature>
<feature type="binding site" evidence="1">
    <location>
        <position position="169"/>
    </location>
    <ligand>
        <name>phosphoenolpyruvate</name>
        <dbReference type="ChEBI" id="CHEBI:58702"/>
    </ligand>
</feature>
<feature type="binding site" evidence="1">
    <location>
        <position position="315"/>
    </location>
    <ligand>
        <name>3-phosphoshikimate</name>
        <dbReference type="ChEBI" id="CHEBI:145989"/>
    </ligand>
</feature>
<feature type="binding site" evidence="1">
    <location>
        <position position="342"/>
    </location>
    <ligand>
        <name>3-phosphoshikimate</name>
        <dbReference type="ChEBI" id="CHEBI:145989"/>
    </ligand>
</feature>
<feature type="binding site" evidence="1">
    <location>
        <position position="346"/>
    </location>
    <ligand>
        <name>phosphoenolpyruvate</name>
        <dbReference type="ChEBI" id="CHEBI:58702"/>
    </ligand>
</feature>
<feature type="binding site" evidence="1">
    <location>
        <position position="388"/>
    </location>
    <ligand>
        <name>phosphoenolpyruvate</name>
        <dbReference type="ChEBI" id="CHEBI:58702"/>
    </ligand>
</feature>
<evidence type="ECO:0000255" key="1">
    <source>
        <dbReference type="HAMAP-Rule" id="MF_00210"/>
    </source>
</evidence>
<name>AROA_PELPD</name>
<comment type="function">
    <text evidence="1">Catalyzes the transfer of the enolpyruvyl moiety of phosphoenolpyruvate (PEP) to the 5-hydroxyl of shikimate-3-phosphate (S3P) to produce enolpyruvyl shikimate-3-phosphate and inorganic phosphate.</text>
</comment>
<comment type="catalytic activity">
    <reaction evidence="1">
        <text>3-phosphoshikimate + phosphoenolpyruvate = 5-O-(1-carboxyvinyl)-3-phosphoshikimate + phosphate</text>
        <dbReference type="Rhea" id="RHEA:21256"/>
        <dbReference type="ChEBI" id="CHEBI:43474"/>
        <dbReference type="ChEBI" id="CHEBI:57701"/>
        <dbReference type="ChEBI" id="CHEBI:58702"/>
        <dbReference type="ChEBI" id="CHEBI:145989"/>
        <dbReference type="EC" id="2.5.1.19"/>
    </reaction>
    <physiologicalReaction direction="left-to-right" evidence="1">
        <dbReference type="Rhea" id="RHEA:21257"/>
    </physiologicalReaction>
</comment>
<comment type="pathway">
    <text evidence="1">Metabolic intermediate biosynthesis; chorismate biosynthesis; chorismate from D-erythrose 4-phosphate and phosphoenolpyruvate: step 6/7.</text>
</comment>
<comment type="subunit">
    <text evidence="1">Monomer.</text>
</comment>
<comment type="subcellular location">
    <subcellularLocation>
        <location evidence="1">Cytoplasm</location>
    </subcellularLocation>
</comment>
<comment type="similarity">
    <text evidence="1">Belongs to the EPSP synthase family.</text>
</comment>
<gene>
    <name evidence="1" type="primary">aroA</name>
    <name type="ordered locus">Ppro_1347</name>
</gene>
<proteinExistence type="inferred from homology"/>
<reference key="1">
    <citation type="submission" date="2006-10" db="EMBL/GenBank/DDBJ databases">
        <title>Complete sequence of chromosome of Pelobacter propionicus DSM 2379.</title>
        <authorList>
            <consortium name="US DOE Joint Genome Institute"/>
            <person name="Copeland A."/>
            <person name="Lucas S."/>
            <person name="Lapidus A."/>
            <person name="Barry K."/>
            <person name="Detter J.C."/>
            <person name="Glavina del Rio T."/>
            <person name="Hammon N."/>
            <person name="Israni S."/>
            <person name="Dalin E."/>
            <person name="Tice H."/>
            <person name="Pitluck S."/>
            <person name="Saunders E."/>
            <person name="Brettin T."/>
            <person name="Bruce D."/>
            <person name="Han C."/>
            <person name="Tapia R."/>
            <person name="Schmutz J."/>
            <person name="Larimer F."/>
            <person name="Land M."/>
            <person name="Hauser L."/>
            <person name="Kyrpides N."/>
            <person name="Kim E."/>
            <person name="Lovley D."/>
            <person name="Richardson P."/>
        </authorList>
    </citation>
    <scope>NUCLEOTIDE SEQUENCE [LARGE SCALE GENOMIC DNA]</scope>
    <source>
        <strain>DSM 2379 / NBRC 103807 / OttBd1</strain>
    </source>
</reference>
<organism>
    <name type="scientific">Pelobacter propionicus (strain DSM 2379 / NBRC 103807 / OttBd1)</name>
    <dbReference type="NCBI Taxonomy" id="338966"/>
    <lineage>
        <taxon>Bacteria</taxon>
        <taxon>Pseudomonadati</taxon>
        <taxon>Thermodesulfobacteriota</taxon>
        <taxon>Desulfuromonadia</taxon>
        <taxon>Desulfuromonadales</taxon>
        <taxon>Desulfuromonadaceae</taxon>
        <taxon>Pelobacter</taxon>
    </lineage>
</organism>
<sequence length="431" mass="45557">MNSISITPGSSLKGELVVPGDKSISHRSIMLGAIANGVTTVRGFLRGEDNMATMAAFRAMGVRIDDDGHLLSIHGRGLHGLEEPGDVLDCGNSGTSMRLLTGLLAGQNFFSVLSGDQYLRKRPMKRVVEPLSRMGARILGRAGGNLAPLAISGGTLNAIGYESPVSSAQIKSAIMLAGLYADGDTSVREPSLSRDHSERMFALFGASLETFHNGVTVKGGIELHAQEIHVPGDISSAAFFIVAALITPDSELLIRNVGVNPTRTGIIDVLRSMGGSIELVDEREVSAEPVADILVRSSRLKGVRIEGQTVPRAIDEFPAICVAAACAEGTTSIRDARELRVKETDRISAMAVNLRTLGVTVDECDEGMDITGVERLGGGVAESFGDHRIAMSLSVAGLVSADAVRVNDIDCVSTSFPNFFSLLERFRTGAP</sequence>
<accession>A1ANP7</accession>
<keyword id="KW-0028">Amino-acid biosynthesis</keyword>
<keyword id="KW-0057">Aromatic amino acid biosynthesis</keyword>
<keyword id="KW-0963">Cytoplasm</keyword>
<keyword id="KW-1185">Reference proteome</keyword>
<keyword id="KW-0808">Transferase</keyword>